<gene>
    <name evidence="9" type="ORF">v1g238655</name>
</gene>
<reference evidence="9 10" key="1">
    <citation type="journal article" date="2007" name="Science">
        <title>Sea anemone genome reveals ancestral eumetazoan gene repertoire and genomic organization.</title>
        <authorList>
            <person name="Putnam N.H."/>
            <person name="Srivastava M."/>
            <person name="Hellsten U."/>
            <person name="Dirks B."/>
            <person name="Chapman J."/>
            <person name="Salamov A."/>
            <person name="Terry A."/>
            <person name="Shapiro H."/>
            <person name="Lindquist E."/>
            <person name="Kapitonov V.V."/>
            <person name="Jurka J."/>
            <person name="Genikhovich G."/>
            <person name="Grigoriev I.V."/>
            <person name="Lucas S.M."/>
            <person name="Steele R.E."/>
            <person name="Finnerty J.R."/>
            <person name="Technau U."/>
            <person name="Martindale M.Q."/>
            <person name="Rokhsar D.S."/>
        </authorList>
    </citation>
    <scope>NUCLEOTIDE SEQUENCE [LARGE SCALE GENOMIC DNA]</scope>
    <source>
        <strain evidence="10">CH2 X CH6</strain>
    </source>
</reference>
<reference key="2">
    <citation type="journal article" date="2018" name="Elife">
        <title>Dynamics of venom composition across a complex life cycle.</title>
        <authorList>
            <person name="Columbus-Shenkar Y.Y."/>
            <person name="Sachkova M.Y."/>
            <person name="Macrander J."/>
            <person name="Fridrich A."/>
            <person name="Modepalli V."/>
            <person name="Reitzel A.M."/>
            <person name="Sunagar K."/>
            <person name="Moran Y."/>
        </authorList>
    </citation>
    <scope>DEVELOPMENTAL STAGE</scope>
    <scope>TISSUE SPECIFICITY</scope>
    <scope>SUBCELLULAR LOCATION</scope>
</reference>
<proteinExistence type="evidence at transcript level"/>
<organism>
    <name type="scientific">Nematostella vectensis</name>
    <name type="common">Starlet sea anemone</name>
    <dbReference type="NCBI Taxonomy" id="45351"/>
    <lineage>
        <taxon>Eukaryota</taxon>
        <taxon>Metazoa</taxon>
        <taxon>Cnidaria</taxon>
        <taxon>Anthozoa</taxon>
        <taxon>Hexacorallia</taxon>
        <taxon>Actiniaria</taxon>
        <taxon>Edwardsiidae</taxon>
        <taxon>Nematostella</taxon>
    </lineage>
</organism>
<keyword id="KW-1015">Disulfide bond</keyword>
<keyword id="KW-0166">Nematocyst</keyword>
<keyword id="KW-1185">Reference proteome</keyword>
<keyword id="KW-0964">Secreted</keyword>
<keyword id="KW-0732">Signal</keyword>
<keyword id="KW-0800">Toxin</keyword>
<feature type="signal peptide" evidence="2">
    <location>
        <begin position="1"/>
        <end position="19"/>
    </location>
</feature>
<feature type="chain" id="PRO_5002714244" description="Nematocyst expressed protein 3-like" evidence="7">
    <location>
        <begin position="20"/>
        <end position="432"/>
    </location>
</feature>
<feature type="domain" description="ShKT 1" evidence="8">
    <location>
        <begin position="59"/>
        <end position="91"/>
    </location>
</feature>
<feature type="domain" description="ShKT 2" evidence="8">
    <location>
        <begin position="107"/>
        <end position="143"/>
    </location>
</feature>
<feature type="domain" description="ShKT 3" evidence="8">
    <location>
        <begin position="149"/>
        <end position="183"/>
    </location>
</feature>
<feature type="region of interest" description="Disordered" evidence="4">
    <location>
        <begin position="235"/>
        <end position="432"/>
    </location>
</feature>
<feature type="compositionally biased region" description="Low complexity" evidence="4">
    <location>
        <begin position="235"/>
        <end position="313"/>
    </location>
</feature>
<feature type="compositionally biased region" description="Pro residues" evidence="4">
    <location>
        <begin position="314"/>
        <end position="330"/>
    </location>
</feature>
<feature type="compositionally biased region" description="Low complexity" evidence="4">
    <location>
        <begin position="331"/>
        <end position="408"/>
    </location>
</feature>
<feature type="compositionally biased region" description="Basic residues" evidence="4">
    <location>
        <begin position="409"/>
        <end position="432"/>
    </location>
</feature>
<feature type="disulfide bond" evidence="3">
    <location>
        <begin position="52"/>
        <end position="91"/>
    </location>
</feature>
<feature type="disulfide bond" evidence="3">
    <location>
        <begin position="59"/>
        <end position="84"/>
    </location>
</feature>
<feature type="disulfide bond" evidence="3">
    <location>
        <begin position="73"/>
        <end position="88"/>
    </location>
</feature>
<feature type="disulfide bond" evidence="3">
    <location>
        <begin position="125"/>
        <end position="140"/>
    </location>
</feature>
<feature type="disulfide bond" evidence="1">
    <location>
        <begin position="157"/>
        <end position="176"/>
    </location>
</feature>
<feature type="disulfide bond" evidence="1">
    <location>
        <begin position="166"/>
        <end position="180"/>
    </location>
</feature>
<name>NEP3L_NEMVE</name>
<evidence type="ECO:0000250" key="1">
    <source>
        <dbReference type="UniProtKB" id="A7RNZ0"/>
    </source>
</evidence>
<evidence type="ECO:0000255" key="2"/>
<evidence type="ECO:0000255" key="3">
    <source>
        <dbReference type="PROSITE-ProRule" id="PRU01005"/>
    </source>
</evidence>
<evidence type="ECO:0000256" key="4">
    <source>
        <dbReference type="SAM" id="MobiDB-lite"/>
    </source>
</evidence>
<evidence type="ECO:0000269" key="5">
    <source>
    </source>
</evidence>
<evidence type="ECO:0000303" key="6">
    <source>
    </source>
</evidence>
<evidence type="ECO:0000305" key="7"/>
<evidence type="ECO:0000305" key="8">
    <source>
    </source>
</evidence>
<evidence type="ECO:0000312" key="9">
    <source>
        <dbReference type="EMBL" id="EDO48497.1"/>
    </source>
</evidence>
<evidence type="ECO:0000312" key="10">
    <source>
        <dbReference type="Proteomes" id="UP000001593"/>
    </source>
</evidence>
<accession>A7RJ13</accession>
<protein>
    <recommendedName>
        <fullName evidence="7">Nematocyst expressed protein 3-like</fullName>
        <shortName evidence="7">NEP-3-like</shortName>
        <shortName evidence="6">NEP3-like</shortName>
    </recommendedName>
</protein>
<sequence>MRVVYLVLVVAVIIAITEAKSVKKSKTRSPKHPRHRTLADDYKLNRISAKYCKDYDDSCKAFGKIAKKDKKSCFNNPDKARMACPVSCKLCDKKTFHKKSKLSDVVVVRAMCVDIEVDQCNPDVCYTNPDWATENCRKTCMLCKPDIRGPCDTDPRCPFWGQYGYCSTATYIDNHCPYNCDVYSYVPEAPQPYPLPIEPLYAYQPLPYPTAPPGVTPATLPPYYENAPQPTYAPGAQYPAATAAPAPSAPGATAAPAPSAPGATAAPAPSAPEATAAPAPSAPEATAAPAPSAPEATAAPAPAPEAAPSEPEAAPAPAPEMAPAPAPEMAPAPEAASAPAPEAAPAPEAASAPAPEAAPAPEAASAPAPEAASAPAPEAAPAPEAASAPAPEAAPAPEAAPSEQPMPGKKSKSKPSKRKGVKKSKSGHKRHH</sequence>
<dbReference type="EMBL" id="DS469513">
    <property type="protein sequence ID" value="EDO48497.1"/>
    <property type="molecule type" value="Genomic_DNA"/>
</dbReference>
<dbReference type="RefSeq" id="XP_001640560.1">
    <property type="nucleotide sequence ID" value="XM_001640510.1"/>
</dbReference>
<dbReference type="SMR" id="A7RJ13"/>
<dbReference type="STRING" id="45351.A7RJ13"/>
<dbReference type="EnsemblMetazoa" id="EDO48497">
    <property type="protein sequence ID" value="EDO48497"/>
    <property type="gene ID" value="NEMVEDRAFT_v1g238655"/>
</dbReference>
<dbReference type="KEGG" id="nve:5520740"/>
<dbReference type="eggNOG" id="KOG1217">
    <property type="taxonomic scope" value="Eukaryota"/>
</dbReference>
<dbReference type="HOGENOM" id="CLU_635095_0_0_1"/>
<dbReference type="InParanoid" id="A7RJ13"/>
<dbReference type="OMA" id="DWATENC"/>
<dbReference type="OrthoDB" id="5987607at2759"/>
<dbReference type="Proteomes" id="UP000001593">
    <property type="component" value="Unassembled WGS sequence"/>
</dbReference>
<dbReference type="GO" id="GO:0005576">
    <property type="term" value="C:extracellular region"/>
    <property type="evidence" value="ECO:0007669"/>
    <property type="project" value="UniProtKB-SubCell"/>
</dbReference>
<dbReference type="GO" id="GO:0042151">
    <property type="term" value="C:nematocyst"/>
    <property type="evidence" value="ECO:0007669"/>
    <property type="project" value="UniProtKB-SubCell"/>
</dbReference>
<dbReference type="GO" id="GO:0090729">
    <property type="term" value="F:toxin activity"/>
    <property type="evidence" value="ECO:0007669"/>
    <property type="project" value="UniProtKB-KW"/>
</dbReference>
<dbReference type="InterPro" id="IPR003582">
    <property type="entry name" value="ShKT_dom"/>
</dbReference>
<dbReference type="PANTHER" id="PTHR48148">
    <property type="entry name" value="KERATINOCYTE PROLINE-RICH PROTEIN"/>
    <property type="match status" value="1"/>
</dbReference>
<dbReference type="PANTHER" id="PTHR48148:SF3">
    <property type="entry name" value="KERATINOCYTE PROLINE-RICH PROTEIN"/>
    <property type="match status" value="1"/>
</dbReference>
<dbReference type="PRINTS" id="PR01217">
    <property type="entry name" value="PRICHEXTENSN"/>
</dbReference>
<dbReference type="SMART" id="SM00254">
    <property type="entry name" value="ShKT"/>
    <property type="match status" value="2"/>
</dbReference>
<comment type="function">
    <text evidence="7">Probable toxin.</text>
</comment>
<comment type="subcellular location">
    <subcellularLocation>
        <location evidence="5">Nematocyst</location>
    </subcellularLocation>
    <subcellularLocation>
        <location evidence="5">Secreted</location>
    </subcellularLocation>
</comment>
<comment type="tissue specificity">
    <text evidence="5">Nematocytes (PubMed:29424690). In late planulae, transcripts are found throughout the ectoderm in nematocytes, with high concentration of expressing cells in the oral pole (PubMed:29424690). In primary polyps, is expressed in nematocytes in the body wall and physa ectoderm and in the upper and lower pharynx (PubMed:29424690).</text>
</comment>
<comment type="developmental stage">
    <text evidence="5">Transcripts are expressed in gastrulae, early and late planulae, metamorphosing planulae, and primary polyps.</text>
</comment>
<comment type="similarity">
    <text evidence="7">Belongs to the NEP3 family.</text>
</comment>